<accession>A7TFW4</accession>
<proteinExistence type="inferred from homology"/>
<feature type="chain" id="PRO_0000366896" description="Eukaryotic translation initiation factor 3 subunit G">
    <location>
        <begin position="1"/>
        <end position="274"/>
    </location>
</feature>
<feature type="domain" description="RRM" evidence="1">
    <location>
        <begin position="191"/>
        <end position="270"/>
    </location>
</feature>
<feature type="region of interest" description="Disordered" evidence="2">
    <location>
        <begin position="161"/>
        <end position="187"/>
    </location>
</feature>
<feature type="compositionally biased region" description="Basic and acidic residues" evidence="2">
    <location>
        <begin position="172"/>
        <end position="187"/>
    </location>
</feature>
<feature type="modified residue" description="Phosphoserine" evidence="1">
    <location>
        <position position="168"/>
    </location>
</feature>
<comment type="function">
    <text evidence="1">RNA-binding component of the eukaryotic translation initiation factor 3 (eIF-3) complex, which is involved in protein synthesis of a specialized repertoire of mRNAs and, together with other initiation factors, stimulates binding of mRNA and methionyl-tRNAi to the 40S ribosome. The eIF-3 complex specifically targets and initiates translation of a subset of mRNAs involved in cell proliferation. This subunit can bind 18S rRNA.</text>
</comment>
<comment type="subunit">
    <text evidence="1">Component of the eukaryotic translation initiation factor 3 (eIF-3) complex.</text>
</comment>
<comment type="subcellular location">
    <subcellularLocation>
        <location evidence="1">Cytoplasm</location>
    </subcellularLocation>
</comment>
<comment type="similarity">
    <text evidence="1">Belongs to the eIF-3 subunit G family.</text>
</comment>
<keyword id="KW-0963">Cytoplasm</keyword>
<keyword id="KW-0396">Initiation factor</keyword>
<keyword id="KW-0597">Phosphoprotein</keyword>
<keyword id="KW-0648">Protein biosynthesis</keyword>
<keyword id="KW-1185">Reference proteome</keyword>
<keyword id="KW-0694">RNA-binding</keyword>
<dbReference type="EMBL" id="DS480384">
    <property type="protein sequence ID" value="EDO18922.1"/>
    <property type="molecule type" value="Genomic_DNA"/>
</dbReference>
<dbReference type="RefSeq" id="XP_001646780.1">
    <property type="nucleotide sequence ID" value="XM_001646730.1"/>
</dbReference>
<dbReference type="SMR" id="A7TFW4"/>
<dbReference type="FunCoup" id="A7TFW4">
    <property type="interactions" value="1174"/>
</dbReference>
<dbReference type="STRING" id="436907.A7TFW4"/>
<dbReference type="GeneID" id="5547242"/>
<dbReference type="KEGG" id="vpo:Kpol_1023p95"/>
<dbReference type="eggNOG" id="KOG0122">
    <property type="taxonomic scope" value="Eukaryota"/>
</dbReference>
<dbReference type="HOGENOM" id="CLU_034595_0_0_1"/>
<dbReference type="InParanoid" id="A7TFW4"/>
<dbReference type="OMA" id="ICQGDHF"/>
<dbReference type="OrthoDB" id="639027at2759"/>
<dbReference type="PhylomeDB" id="A7TFW4"/>
<dbReference type="Proteomes" id="UP000000267">
    <property type="component" value="Unassembled WGS sequence"/>
</dbReference>
<dbReference type="GO" id="GO:0016282">
    <property type="term" value="C:eukaryotic 43S preinitiation complex"/>
    <property type="evidence" value="ECO:0007669"/>
    <property type="project" value="UniProtKB-UniRule"/>
</dbReference>
<dbReference type="GO" id="GO:0033290">
    <property type="term" value="C:eukaryotic 48S preinitiation complex"/>
    <property type="evidence" value="ECO:0007669"/>
    <property type="project" value="UniProtKB-UniRule"/>
</dbReference>
<dbReference type="GO" id="GO:0005852">
    <property type="term" value="C:eukaryotic translation initiation factor 3 complex"/>
    <property type="evidence" value="ECO:0007669"/>
    <property type="project" value="UniProtKB-UniRule"/>
</dbReference>
<dbReference type="GO" id="GO:0043614">
    <property type="term" value="C:multi-eIF complex"/>
    <property type="evidence" value="ECO:0007669"/>
    <property type="project" value="EnsemblFungi"/>
</dbReference>
<dbReference type="GO" id="GO:0003723">
    <property type="term" value="F:RNA binding"/>
    <property type="evidence" value="ECO:0007669"/>
    <property type="project" value="UniProtKB-UniRule"/>
</dbReference>
<dbReference type="GO" id="GO:0003743">
    <property type="term" value="F:translation initiation factor activity"/>
    <property type="evidence" value="ECO:0007669"/>
    <property type="project" value="UniProtKB-UniRule"/>
</dbReference>
<dbReference type="GO" id="GO:0001732">
    <property type="term" value="P:formation of cytoplasmic translation initiation complex"/>
    <property type="evidence" value="ECO:0007669"/>
    <property type="project" value="UniProtKB-UniRule"/>
</dbReference>
<dbReference type="GO" id="GO:0002188">
    <property type="term" value="P:translation reinitiation"/>
    <property type="evidence" value="ECO:0007669"/>
    <property type="project" value="EnsemblFungi"/>
</dbReference>
<dbReference type="GO" id="GO:0006415">
    <property type="term" value="P:translational termination"/>
    <property type="evidence" value="ECO:0007669"/>
    <property type="project" value="EnsemblFungi"/>
</dbReference>
<dbReference type="CDD" id="cd12933">
    <property type="entry name" value="eIF3G"/>
    <property type="match status" value="1"/>
</dbReference>
<dbReference type="CDD" id="cd12408">
    <property type="entry name" value="RRM_eIF3G_like"/>
    <property type="match status" value="1"/>
</dbReference>
<dbReference type="FunFam" id="3.30.70.330:FF:000716">
    <property type="entry name" value="Eukaryotic translation initiation factor 3 subunit G"/>
    <property type="match status" value="1"/>
</dbReference>
<dbReference type="Gene3D" id="3.30.70.330">
    <property type="match status" value="1"/>
</dbReference>
<dbReference type="HAMAP" id="MF_03006">
    <property type="entry name" value="eIF3g"/>
    <property type="match status" value="1"/>
</dbReference>
<dbReference type="InterPro" id="IPR017334">
    <property type="entry name" value="eIF3_g"/>
</dbReference>
<dbReference type="InterPro" id="IPR024675">
    <property type="entry name" value="eIF3g_N"/>
</dbReference>
<dbReference type="InterPro" id="IPR034240">
    <property type="entry name" value="eIF3G_RRM"/>
</dbReference>
<dbReference type="InterPro" id="IPR012677">
    <property type="entry name" value="Nucleotide-bd_a/b_plait_sf"/>
</dbReference>
<dbReference type="InterPro" id="IPR035979">
    <property type="entry name" value="RBD_domain_sf"/>
</dbReference>
<dbReference type="InterPro" id="IPR000504">
    <property type="entry name" value="RRM_dom"/>
</dbReference>
<dbReference type="PANTHER" id="PTHR10352">
    <property type="entry name" value="EUKARYOTIC TRANSLATION INITIATION FACTOR 3 SUBUNIT G"/>
    <property type="match status" value="1"/>
</dbReference>
<dbReference type="Pfam" id="PF12353">
    <property type="entry name" value="eIF3g"/>
    <property type="match status" value="1"/>
</dbReference>
<dbReference type="Pfam" id="PF00076">
    <property type="entry name" value="RRM_1"/>
    <property type="match status" value="1"/>
</dbReference>
<dbReference type="PIRSF" id="PIRSF037949">
    <property type="entry name" value="Transl_init_eIF-3_RNA-bind"/>
    <property type="match status" value="1"/>
</dbReference>
<dbReference type="SMART" id="SM00360">
    <property type="entry name" value="RRM"/>
    <property type="match status" value="1"/>
</dbReference>
<dbReference type="SUPFAM" id="SSF54928">
    <property type="entry name" value="RNA-binding domain, RBD"/>
    <property type="match status" value="1"/>
</dbReference>
<dbReference type="PROSITE" id="PS50102">
    <property type="entry name" value="RRM"/>
    <property type="match status" value="1"/>
</dbReference>
<sequence length="274" mass="30640">MTEAMNSEVINNPDGTKTIITYRVENGQKFKITQKVREVHVSEKVHKAVASRKQWAKYGEERNAPPGPNHSTTQLGEEVYLRLSRNWKQKEEEETEKAKIKSDGIISCRLCGNAHYTMNCPFKSIMSDIAALEDPNAPIEVGSNAVEAPVETASSAAAVASGKYVPPSRRAGAKDPSSDAYRDSRERDDMATLKITQLNENADETTLREELLFPFGNIPRVVVVRNRETGRSRGLAFVTFSSEEVAEKARRLLNGRGFMNLILQVDWSKPKEKE</sequence>
<name>EIF3G_VANPO</name>
<evidence type="ECO:0000255" key="1">
    <source>
        <dbReference type="HAMAP-Rule" id="MF_03006"/>
    </source>
</evidence>
<evidence type="ECO:0000256" key="2">
    <source>
        <dbReference type="SAM" id="MobiDB-lite"/>
    </source>
</evidence>
<reference key="1">
    <citation type="journal article" date="2007" name="Proc. Natl. Acad. Sci. U.S.A.">
        <title>Independent sorting-out of thousands of duplicated gene pairs in two yeast species descended from a whole-genome duplication.</title>
        <authorList>
            <person name="Scannell D.R."/>
            <person name="Frank A.C."/>
            <person name="Conant G.C."/>
            <person name="Byrne K.P."/>
            <person name="Woolfit M."/>
            <person name="Wolfe K.H."/>
        </authorList>
    </citation>
    <scope>NUCLEOTIDE SEQUENCE [LARGE SCALE GENOMIC DNA]</scope>
    <source>
        <strain>ATCC 22028 / DSM 70294 / BCRC 21397 / CBS 2163 / NBRC 10782 / NRRL Y-8283 / UCD 57-17</strain>
    </source>
</reference>
<protein>
    <recommendedName>
        <fullName evidence="1">Eukaryotic translation initiation factor 3 subunit G</fullName>
        <shortName evidence="1">eIF3g</shortName>
    </recommendedName>
    <alternativeName>
        <fullName evidence="1">Eukaryotic translation initiation factor 3 RNA-binding subunit</fullName>
        <shortName evidence="1">eIF-3 RNA-binding subunit</shortName>
    </alternativeName>
    <alternativeName>
        <fullName evidence="1">Translation initiation factor eIF3 p33 subunit homolog</fullName>
        <shortName evidence="1">eIF3 p33 homolog</shortName>
    </alternativeName>
</protein>
<organism>
    <name type="scientific">Vanderwaltozyma polyspora (strain ATCC 22028 / DSM 70294 / BCRC 21397 / CBS 2163 / NBRC 10782 / NRRL Y-8283 / UCD 57-17)</name>
    <name type="common">Kluyveromyces polysporus</name>
    <dbReference type="NCBI Taxonomy" id="436907"/>
    <lineage>
        <taxon>Eukaryota</taxon>
        <taxon>Fungi</taxon>
        <taxon>Dikarya</taxon>
        <taxon>Ascomycota</taxon>
        <taxon>Saccharomycotina</taxon>
        <taxon>Saccharomycetes</taxon>
        <taxon>Saccharomycetales</taxon>
        <taxon>Saccharomycetaceae</taxon>
        <taxon>Vanderwaltozyma</taxon>
    </lineage>
</organism>
<gene>
    <name evidence="1" type="primary">TIF35</name>
    <name type="ORF">Kpol_1023p95</name>
</gene>